<name>T2MG2_AGEAP</name>
<accession>P11058</accession>
<sequence length="37" mass="4110">ECATKNKRCADWAGPWCCDGLYCSCRSYPGCMCRPSS</sequence>
<keyword id="KW-0027">Amidation</keyword>
<keyword id="KW-0903">Direct protein sequencing</keyword>
<keyword id="KW-1015">Disulfide bond</keyword>
<keyword id="KW-0872">Ion channel impairing toxin</keyword>
<keyword id="KW-0960">Knottin</keyword>
<keyword id="KW-0528">Neurotoxin</keyword>
<keyword id="KW-0638">Presynaptic neurotoxin</keyword>
<keyword id="KW-0964">Secreted</keyword>
<keyword id="KW-0800">Toxin</keyword>
<keyword id="KW-0738">Voltage-gated sodium channel impairing toxin</keyword>
<protein>
    <recommendedName>
        <fullName evidence="5">Mu-agatoxin-Aa1b</fullName>
        <shortName evidence="5">Mu-AGTX-Aa1b</shortName>
    </recommendedName>
    <alternativeName>
        <fullName evidence="4">Mu-agatoxin II</fullName>
        <shortName evidence="4">Mu-Aga II</shortName>
    </alternativeName>
    <alternativeName>
        <fullName evidence="5">Mu-agatoxin-2</fullName>
    </alternativeName>
</protein>
<proteinExistence type="evidence at protein level"/>
<evidence type="ECO:0000250" key="1"/>
<evidence type="ECO:0000250" key="2">
    <source>
        <dbReference type="UniProtKB" id="P83257"/>
    </source>
</evidence>
<evidence type="ECO:0000269" key="3">
    <source>
    </source>
</evidence>
<evidence type="ECO:0000303" key="4">
    <source>
    </source>
</evidence>
<evidence type="ECO:0000305" key="5"/>
<evidence type="ECO:0000305" key="6">
    <source>
    </source>
</evidence>
<comment type="function">
    <text evidence="3">Insecticidal neurotoxin that induces an irreversible spastic paralysis when injected into insects. Modifies presynaptic voltage-gated sodium channels (Nav), causing them to open at the normal resting potential of the nerve. This leads to spontaneous release of neurotransmitter and repetitive action potentials in motor neurons.</text>
</comment>
<comment type="subcellular location">
    <subcellularLocation>
        <location evidence="3">Secreted</location>
    </subcellularLocation>
</comment>
<comment type="tissue specificity">
    <text evidence="6">Expressed by the venom gland.</text>
</comment>
<comment type="domain">
    <text evidence="1">The presence of a 'disulfide through disulfide knot' structurally defines this protein as a knottin.</text>
</comment>
<comment type="toxic dose">
    <text evidence="3">LD(50) is 75 +-27 mg/kg into third stadium larvae of M.sexta.</text>
</comment>
<comment type="similarity">
    <text evidence="5">Belongs to the neurotoxin 07 (Beta/delta-agtx) family. 01 (aga-2) subfamily.</text>
</comment>
<organism>
    <name type="scientific">Agelenopsis aperta</name>
    <name type="common">North American funnel-web spider</name>
    <name type="synonym">Agelenopsis gertschi</name>
    <dbReference type="NCBI Taxonomy" id="6908"/>
    <lineage>
        <taxon>Eukaryota</taxon>
        <taxon>Metazoa</taxon>
        <taxon>Ecdysozoa</taxon>
        <taxon>Arthropoda</taxon>
        <taxon>Chelicerata</taxon>
        <taxon>Arachnida</taxon>
        <taxon>Araneae</taxon>
        <taxon>Araneomorphae</taxon>
        <taxon>Entelegynae</taxon>
        <taxon>Agelenidae</taxon>
        <taxon>Agelenopsis</taxon>
    </lineage>
</organism>
<feature type="peptide" id="PRO_0000044954" description="Mu-agatoxin-Aa1b" evidence="3">
    <location>
        <begin position="1"/>
        <end position="37"/>
    </location>
</feature>
<feature type="modified residue" description="Serine amide" evidence="6">
    <location>
        <position position="37"/>
    </location>
</feature>
<feature type="disulfide bond" evidence="2">
    <location>
        <begin position="2"/>
        <end position="18"/>
    </location>
</feature>
<feature type="disulfide bond" evidence="2">
    <location>
        <begin position="9"/>
        <end position="23"/>
    </location>
</feature>
<feature type="disulfide bond" evidence="2">
    <location>
        <begin position="17"/>
        <end position="33"/>
    </location>
</feature>
<feature type="disulfide bond" evidence="2">
    <location>
        <begin position="25"/>
        <end position="31"/>
    </location>
</feature>
<reference key="1">
    <citation type="journal article" date="1989" name="J. Biol. Chem.">
        <title>Purification and characterization of two classes of neurotoxins from the funnel web spider, Agelenopsis aperta.</title>
        <authorList>
            <person name="Skinner W.S."/>
            <person name="Adams M.E."/>
            <person name="Quistad G.B."/>
            <person name="Kataoka H."/>
            <person name="Cesarin B.J."/>
            <person name="Enderlin F.E."/>
            <person name="Schooley D.A."/>
        </authorList>
    </citation>
    <scope>PROTEIN SEQUENCE</scope>
    <scope>FUNCTION</scope>
    <scope>SUBCELLULAR LOCATION</scope>
    <scope>TOXIC DOSE</scope>
    <scope>PROBABLE AMIDATION AT SER-37</scope>
    <source>
        <tissue>Venom</tissue>
    </source>
</reference>
<reference key="2">
    <citation type="journal article" date="2004" name="Toxicon">
        <title>Agatoxins: ion channel specific toxins from the American funnel web spider, Agelenopsis aperta.</title>
        <authorList>
            <person name="Adams M.E."/>
        </authorList>
    </citation>
    <scope>REVIEW</scope>
</reference>
<dbReference type="PIR" id="B32038">
    <property type="entry name" value="B32038"/>
</dbReference>
<dbReference type="SMR" id="P11058"/>
<dbReference type="TCDB" id="8.B.6.1.2">
    <property type="family name" value="the ca(2+) channel-targeting spider toxin (cst) family"/>
</dbReference>
<dbReference type="ArachnoServer" id="AS000377">
    <property type="toxin name" value="mu-agatoxin-Aa1b"/>
</dbReference>
<dbReference type="GO" id="GO:0005576">
    <property type="term" value="C:extracellular region"/>
    <property type="evidence" value="ECO:0007669"/>
    <property type="project" value="UniProtKB-SubCell"/>
</dbReference>
<dbReference type="GO" id="GO:0044231">
    <property type="term" value="C:host cell presynaptic membrane"/>
    <property type="evidence" value="ECO:0007669"/>
    <property type="project" value="UniProtKB-KW"/>
</dbReference>
<dbReference type="GO" id="GO:0017080">
    <property type="term" value="F:sodium channel regulator activity"/>
    <property type="evidence" value="ECO:0007669"/>
    <property type="project" value="UniProtKB-KW"/>
</dbReference>
<dbReference type="GO" id="GO:0090729">
    <property type="term" value="F:toxin activity"/>
    <property type="evidence" value="ECO:0007669"/>
    <property type="project" value="UniProtKB-KW"/>
</dbReference>
<dbReference type="InterPro" id="IPR016328">
    <property type="entry name" value="Beta/delta-agatoxin_fam"/>
</dbReference>
<dbReference type="Pfam" id="PF05980">
    <property type="entry name" value="Toxin_7"/>
    <property type="match status" value="1"/>
</dbReference>
<dbReference type="PIRSF" id="PIRSF001882">
    <property type="entry name" value="Curtatoxin"/>
    <property type="match status" value="1"/>
</dbReference>
<dbReference type="SUPFAM" id="SSF57059">
    <property type="entry name" value="omega toxin-like"/>
    <property type="match status" value="1"/>
</dbReference>
<dbReference type="PROSITE" id="PS60015">
    <property type="entry name" value="MU_AGATOXIN"/>
    <property type="match status" value="1"/>
</dbReference>